<name>CRBG1_HUMAN</name>
<dbReference type="EMBL" id="AK300443">
    <property type="protein sequence ID" value="BAG62166.1"/>
    <property type="molecule type" value="mRNA"/>
</dbReference>
<dbReference type="EMBL" id="AL109920">
    <property type="status" value="NOT_ANNOTATED_CDS"/>
    <property type="molecule type" value="Genomic_DNA"/>
</dbReference>
<dbReference type="EMBL" id="AL359292">
    <property type="status" value="NOT_ANNOTATED_CDS"/>
    <property type="molecule type" value="Genomic_DNA"/>
</dbReference>
<dbReference type="EMBL" id="AL390074">
    <property type="status" value="NOT_ANNOTATED_CDS"/>
    <property type="molecule type" value="Genomic_DNA"/>
</dbReference>
<dbReference type="EMBL" id="KF458246">
    <property type="status" value="NOT_ANNOTATED_CDS"/>
    <property type="molecule type" value="Genomic_DNA"/>
</dbReference>
<dbReference type="EMBL" id="KF458249">
    <property type="status" value="NOT_ANNOTATED_CDS"/>
    <property type="molecule type" value="Genomic_DNA"/>
</dbReference>
<dbReference type="EMBL" id="CH471051">
    <property type="protein sequence ID" value="EAW48412.1"/>
    <property type="molecule type" value="Genomic_DNA"/>
</dbReference>
<dbReference type="EMBL" id="U83116">
    <property type="protein sequence ID" value="AAB53792.1"/>
    <property type="molecule type" value="Genomic_DNA"/>
</dbReference>
<dbReference type="EMBL" id="U83115">
    <property type="protein sequence ID" value="AAB53791.1"/>
    <property type="molecule type" value="mRNA"/>
</dbReference>
<dbReference type="CCDS" id="CCDS93984.1">
    <molecule id="Q9Y4K1-3"/>
</dbReference>
<dbReference type="RefSeq" id="NP_001358171.1">
    <molecule id="Q9Y4K1-3"/>
    <property type="nucleotide sequence ID" value="NM_001371242.2"/>
</dbReference>
<dbReference type="RefSeq" id="NP_001615.2">
    <molecule id="Q9Y4K1-1"/>
    <property type="nucleotide sequence ID" value="NM_001624.4"/>
</dbReference>
<dbReference type="RefSeq" id="XP_005266896.1">
    <property type="nucleotide sequence ID" value="XM_005266839.3"/>
</dbReference>
<dbReference type="PDB" id="2DAD">
    <property type="method" value="NMR"/>
    <property type="chains" value="A=1824-1903"/>
</dbReference>
<dbReference type="PDB" id="3CW3">
    <property type="method" value="X-ray"/>
    <property type="resolution" value="1.88 A"/>
    <property type="chains" value="A=1430-1525"/>
</dbReference>
<dbReference type="PDB" id="6VRO">
    <property type="method" value="X-ray"/>
    <property type="resolution" value="2.45 A"/>
    <property type="chains" value="B=1124-1149"/>
</dbReference>
<dbReference type="PDBsum" id="2DAD"/>
<dbReference type="PDBsum" id="3CW3"/>
<dbReference type="PDBsum" id="6VRO"/>
<dbReference type="SMR" id="Q9Y4K1"/>
<dbReference type="BioGRID" id="106705">
    <property type="interactions" value="108"/>
</dbReference>
<dbReference type="ELM" id="Q9Y4K1"/>
<dbReference type="FunCoup" id="Q9Y4K1">
    <property type="interactions" value="195"/>
</dbReference>
<dbReference type="IntAct" id="Q9Y4K1">
    <property type="interactions" value="62"/>
</dbReference>
<dbReference type="MINT" id="Q9Y4K1"/>
<dbReference type="STRING" id="9606.ENSP00000358062"/>
<dbReference type="CAZy" id="CBM13">
    <property type="family name" value="Carbohydrate-Binding Module Family 13"/>
</dbReference>
<dbReference type="GlyConnect" id="2023">
    <property type="glycosylation" value="2 N-Linked glycans (1 site)"/>
</dbReference>
<dbReference type="GlyCosmos" id="Q9Y4K1">
    <property type="glycosylation" value="3 sites, 5 glycans"/>
</dbReference>
<dbReference type="GlyGen" id="Q9Y4K1">
    <property type="glycosylation" value="1 site, 1 N-linked glycan (1 site)"/>
</dbReference>
<dbReference type="iPTMnet" id="Q9Y4K1"/>
<dbReference type="PhosphoSitePlus" id="Q9Y4K1"/>
<dbReference type="SwissPalm" id="Q9Y4K1"/>
<dbReference type="BioMuta" id="CRYBG1"/>
<dbReference type="DMDM" id="76800646"/>
<dbReference type="jPOST" id="Q9Y4K1"/>
<dbReference type="MassIVE" id="Q9Y4K1"/>
<dbReference type="PaxDb" id="9606-ENSP00000358062"/>
<dbReference type="PeptideAtlas" id="Q9Y4K1"/>
<dbReference type="PRIDE" id="Q9Y4K1"/>
<dbReference type="ProteomicsDB" id="5139"/>
<dbReference type="ProteomicsDB" id="86224">
    <molecule id="Q9Y4K1-1"/>
</dbReference>
<dbReference type="Pumba" id="Q9Y4K1"/>
<dbReference type="Antibodypedia" id="70882">
    <property type="antibodies" value="26 antibodies from 9 providers"/>
</dbReference>
<dbReference type="DNASU" id="202"/>
<dbReference type="Ensembl" id="ENST00000633556.3">
    <molecule id="Q9Y4K1-3"/>
    <property type="protein sequence ID" value="ENSP00000488010.2"/>
    <property type="gene ID" value="ENSG00000112297.18"/>
</dbReference>
<dbReference type="GeneID" id="202"/>
<dbReference type="KEGG" id="hsa:202"/>
<dbReference type="MANE-Select" id="ENST00000633556.3">
    <property type="protein sequence ID" value="ENSP00000488010.2"/>
    <property type="RefSeq nucleotide sequence ID" value="NM_001371242.2"/>
    <property type="RefSeq protein sequence ID" value="NP_001358171.1"/>
</dbReference>
<dbReference type="UCSC" id="uc003prh.4">
    <molecule id="Q9Y4K1-3"/>
    <property type="organism name" value="human"/>
</dbReference>
<dbReference type="AGR" id="HGNC:356"/>
<dbReference type="CTD" id="202"/>
<dbReference type="DisGeNET" id="202"/>
<dbReference type="GeneCards" id="CRYBG1"/>
<dbReference type="HGNC" id="HGNC:356">
    <property type="gene designation" value="CRYBG1"/>
</dbReference>
<dbReference type="MIM" id="601797">
    <property type="type" value="gene"/>
</dbReference>
<dbReference type="neXtProt" id="NX_Q9Y4K1"/>
<dbReference type="OpenTargets" id="ENSG00000112297"/>
<dbReference type="PharmGKB" id="PA24649"/>
<dbReference type="VEuPathDB" id="HostDB:ENSG00000112297"/>
<dbReference type="eggNOG" id="ENOG502QUA4">
    <property type="taxonomic scope" value="Eukaryota"/>
</dbReference>
<dbReference type="GeneTree" id="ENSGT00940000155695"/>
<dbReference type="HOGENOM" id="CLU_002648_0_0_1"/>
<dbReference type="InParanoid" id="Q9Y4K1"/>
<dbReference type="OMA" id="WEAMVLT"/>
<dbReference type="OrthoDB" id="9895617at2759"/>
<dbReference type="PAN-GO" id="Q9Y4K1">
    <property type="GO annotations" value="0 GO annotations based on evolutionary models"/>
</dbReference>
<dbReference type="PhylomeDB" id="Q9Y4K1"/>
<dbReference type="TreeFam" id="TF331078"/>
<dbReference type="PathwayCommons" id="Q9Y4K1"/>
<dbReference type="SignaLink" id="Q9Y4K1"/>
<dbReference type="BioGRID-ORCS" id="202">
    <property type="hits" value="8 hits in 1131 CRISPR screens"/>
</dbReference>
<dbReference type="ChiTaRS" id="AIM1">
    <property type="organism name" value="human"/>
</dbReference>
<dbReference type="EvolutionaryTrace" id="Q9Y4K1"/>
<dbReference type="GeneWiki" id="AIM1"/>
<dbReference type="GenomeRNAi" id="202"/>
<dbReference type="Pharos" id="Q9Y4K1">
    <property type="development level" value="Tbio"/>
</dbReference>
<dbReference type="PRO" id="PR:Q9Y4K1"/>
<dbReference type="Proteomes" id="UP000005640">
    <property type="component" value="Chromosome 6"/>
</dbReference>
<dbReference type="RNAct" id="Q9Y4K1">
    <property type="molecule type" value="protein"/>
</dbReference>
<dbReference type="Bgee" id="ENSG00000112297">
    <property type="expression patterns" value="Expressed in tongue squamous epithelium and 169 other cell types or tissues"/>
</dbReference>
<dbReference type="GO" id="GO:0030246">
    <property type="term" value="F:carbohydrate binding"/>
    <property type="evidence" value="ECO:0007669"/>
    <property type="project" value="UniProtKB-KW"/>
</dbReference>
<dbReference type="CDD" id="cd23464">
    <property type="entry name" value="beta-trefoil_Ricin_CRYBG1"/>
    <property type="match status" value="1"/>
</dbReference>
<dbReference type="Gene3D" id="2.80.10.50">
    <property type="match status" value="1"/>
</dbReference>
<dbReference type="Gene3D" id="2.60.20.10">
    <property type="entry name" value="Crystallins"/>
    <property type="match status" value="6"/>
</dbReference>
<dbReference type="InterPro" id="IPR050252">
    <property type="entry name" value="Beta/Gamma-Crystallin"/>
</dbReference>
<dbReference type="InterPro" id="IPR001064">
    <property type="entry name" value="Beta/gamma_crystallin"/>
</dbReference>
<dbReference type="InterPro" id="IPR011024">
    <property type="entry name" value="G_crystallin-like"/>
</dbReference>
<dbReference type="InterPro" id="IPR035992">
    <property type="entry name" value="Ricin_B-like_lectins"/>
</dbReference>
<dbReference type="InterPro" id="IPR000772">
    <property type="entry name" value="Ricin_B_lectin"/>
</dbReference>
<dbReference type="PANTHER" id="PTHR11818">
    <property type="entry name" value="BETA/GAMMA CRYSTALLIN"/>
    <property type="match status" value="1"/>
</dbReference>
<dbReference type="PANTHER" id="PTHR11818:SF50">
    <property type="entry name" value="BETA_GAMMA CRYSTALLIN DOMAIN-CONTAINING PROTEIN 2"/>
    <property type="match status" value="1"/>
</dbReference>
<dbReference type="Pfam" id="PF00030">
    <property type="entry name" value="Crystall"/>
    <property type="match status" value="6"/>
</dbReference>
<dbReference type="Pfam" id="PF00652">
    <property type="entry name" value="Ricin_B_lectin"/>
    <property type="match status" value="1"/>
</dbReference>
<dbReference type="PRINTS" id="PR01367">
    <property type="entry name" value="BGCRYSTALLIN"/>
</dbReference>
<dbReference type="SMART" id="SM00458">
    <property type="entry name" value="RICIN"/>
    <property type="match status" value="1"/>
</dbReference>
<dbReference type="SMART" id="SM00247">
    <property type="entry name" value="XTALbg"/>
    <property type="match status" value="6"/>
</dbReference>
<dbReference type="SUPFAM" id="SSF49695">
    <property type="entry name" value="gamma-Crystallin-like"/>
    <property type="match status" value="3"/>
</dbReference>
<dbReference type="SUPFAM" id="SSF50370">
    <property type="entry name" value="Ricin B-like lectins"/>
    <property type="match status" value="1"/>
</dbReference>
<dbReference type="PROSITE" id="PS50915">
    <property type="entry name" value="CRYSTALLIN_BETA_GAMMA"/>
    <property type="match status" value="12"/>
</dbReference>
<dbReference type="PROSITE" id="PS50231">
    <property type="entry name" value="RICIN_B_LECTIN"/>
    <property type="match status" value="1"/>
</dbReference>
<organism>
    <name type="scientific">Homo sapiens</name>
    <name type="common">Human</name>
    <dbReference type="NCBI Taxonomy" id="9606"/>
    <lineage>
        <taxon>Eukaryota</taxon>
        <taxon>Metazoa</taxon>
        <taxon>Chordata</taxon>
        <taxon>Craniata</taxon>
        <taxon>Vertebrata</taxon>
        <taxon>Euteleostomi</taxon>
        <taxon>Mammalia</taxon>
        <taxon>Eutheria</taxon>
        <taxon>Euarchontoglires</taxon>
        <taxon>Primates</taxon>
        <taxon>Haplorrhini</taxon>
        <taxon>Catarrhini</taxon>
        <taxon>Hominidae</taxon>
        <taxon>Homo</taxon>
    </lineage>
</organism>
<comment type="function">
    <text>May function as suppressor of malignant melanoma. It may exert its effects through interactions with the cytoskeleton.</text>
</comment>
<comment type="alternative products">
    <event type="alternative splicing"/>
    <isoform>
        <id>Q9Y4K1-3</id>
        <name>3</name>
        <sequence type="displayed"/>
    </isoform>
    <isoform>
        <id>Q9Y4K1-1</id>
        <name>1</name>
        <sequence type="described" ref="VSP_062345"/>
    </isoform>
    <isoform>
        <id>Q9Y4K1-2</id>
        <name>2</name>
        <sequence type="described" ref="VSP_062344"/>
    </isoform>
</comment>
<comment type="similarity">
    <text evidence="6">Belongs to the beta/gamma-crystallin family.</text>
</comment>
<proteinExistence type="evidence at protein level"/>
<evidence type="ECO:0000255" key="1">
    <source>
        <dbReference type="PROSITE-ProRule" id="PRU00028"/>
    </source>
</evidence>
<evidence type="ECO:0000255" key="2">
    <source>
        <dbReference type="PROSITE-ProRule" id="PRU00174"/>
    </source>
</evidence>
<evidence type="ECO:0000256" key="3">
    <source>
        <dbReference type="SAM" id="MobiDB-lite"/>
    </source>
</evidence>
<evidence type="ECO:0000269" key="4">
    <source>
    </source>
</evidence>
<evidence type="ECO:0000303" key="5">
    <source>
    </source>
</evidence>
<evidence type="ECO:0000305" key="6"/>
<evidence type="ECO:0000312" key="7">
    <source>
        <dbReference type="HGNC" id="HGNC:356"/>
    </source>
</evidence>
<evidence type="ECO:0007744" key="8">
    <source>
    </source>
</evidence>
<evidence type="ECO:0007744" key="9">
    <source>
    </source>
</evidence>
<evidence type="ECO:0007744" key="10">
    <source>
    </source>
</evidence>
<evidence type="ECO:0007829" key="11">
    <source>
        <dbReference type="PDB" id="2DAD"/>
    </source>
</evidence>
<evidence type="ECO:0007829" key="12">
    <source>
        <dbReference type="PDB" id="3CW3"/>
    </source>
</evidence>
<keyword id="KW-0002">3D-structure</keyword>
<keyword id="KW-0025">Alternative splicing</keyword>
<keyword id="KW-0430">Lectin</keyword>
<keyword id="KW-0597">Phosphoprotein</keyword>
<keyword id="KW-1267">Proteomics identification</keyword>
<keyword id="KW-1185">Reference proteome</keyword>
<keyword id="KW-0677">Repeat</keyword>
<feature type="chain" id="PRO_0000057609" description="Beta/gamma crystallin domain-containing protein 1">
    <location>
        <begin position="1"/>
        <end position="2131"/>
    </location>
</feature>
<feature type="domain" description="Beta/gamma crystallin 'Greek key' 1" evidence="1">
    <location>
        <begin position="1430"/>
        <end position="1469"/>
    </location>
</feature>
<feature type="domain" description="Beta/gamma crystallin 'Greek key' 2" evidence="1">
    <location>
        <begin position="1470"/>
        <end position="1525"/>
    </location>
</feature>
<feature type="domain" description="Beta/gamma crystallin 'Greek key' 3" evidence="1">
    <location>
        <begin position="1531"/>
        <end position="1571"/>
    </location>
</feature>
<feature type="domain" description="Beta/gamma crystallin 'Greek key' 4" evidence="1">
    <location>
        <begin position="1572"/>
        <end position="1614"/>
    </location>
</feature>
<feature type="domain" description="Beta/gamma crystallin 'Greek key' 5" evidence="1">
    <location>
        <begin position="1626"/>
        <end position="1678"/>
    </location>
</feature>
<feature type="domain" description="Beta/gamma crystallin 'Greek key' 6" evidence="1">
    <location>
        <begin position="1679"/>
        <end position="1721"/>
    </location>
</feature>
<feature type="domain" description="Beta/gamma crystallin 'Greek key' 7" evidence="1">
    <location>
        <begin position="1727"/>
        <end position="1769"/>
    </location>
</feature>
<feature type="domain" description="Beta/gamma crystallin 'Greek key' 8" evidence="1">
    <location>
        <begin position="1770"/>
        <end position="1812"/>
    </location>
</feature>
<feature type="domain" description="Beta/gamma crystallin 'Greek key' 9" evidence="1">
    <location>
        <begin position="1823"/>
        <end position="1860"/>
    </location>
</feature>
<feature type="domain" description="Beta/gamma crystallin 'Greek key' 10" evidence="1">
    <location>
        <begin position="1861"/>
        <end position="1904"/>
    </location>
</feature>
<feature type="domain" description="Beta/gamma crystallin 'Greek key' 11" evidence="1">
    <location>
        <begin position="1910"/>
        <end position="1950"/>
    </location>
</feature>
<feature type="domain" description="Beta/gamma crystallin 'Greek key' 12" evidence="1">
    <location>
        <begin position="1951"/>
        <end position="1992"/>
    </location>
</feature>
<feature type="domain" description="Ricin B-type lectin" evidence="2">
    <location>
        <begin position="1994"/>
        <end position="2127"/>
    </location>
</feature>
<feature type="region of interest" description="Disordered" evidence="3">
    <location>
        <begin position="1"/>
        <end position="53"/>
    </location>
</feature>
<feature type="region of interest" description="Disordered" evidence="3">
    <location>
        <begin position="104"/>
        <end position="370"/>
    </location>
</feature>
<feature type="region of interest" description="Disordered" evidence="3">
    <location>
        <begin position="385"/>
        <end position="674"/>
    </location>
</feature>
<feature type="region of interest" description="Disordered" evidence="3">
    <location>
        <begin position="688"/>
        <end position="707"/>
    </location>
</feature>
<feature type="region of interest" description="Disordered" evidence="3">
    <location>
        <begin position="723"/>
        <end position="743"/>
    </location>
</feature>
<feature type="region of interest" description="Disordered" evidence="3">
    <location>
        <begin position="758"/>
        <end position="791"/>
    </location>
</feature>
<feature type="region of interest" description="Disordered" evidence="3">
    <location>
        <begin position="837"/>
        <end position="889"/>
    </location>
</feature>
<feature type="region of interest" description="Disordered" evidence="3">
    <location>
        <begin position="926"/>
        <end position="947"/>
    </location>
</feature>
<feature type="region of interest" description="Disordered" evidence="3">
    <location>
        <begin position="1041"/>
        <end position="1101"/>
    </location>
</feature>
<feature type="region of interest" description="Disordered" evidence="3">
    <location>
        <begin position="1271"/>
        <end position="1302"/>
    </location>
</feature>
<feature type="region of interest" description="Disordered" evidence="3">
    <location>
        <begin position="1316"/>
        <end position="1348"/>
    </location>
</feature>
<feature type="compositionally biased region" description="Basic residues" evidence="3">
    <location>
        <begin position="19"/>
        <end position="35"/>
    </location>
</feature>
<feature type="compositionally biased region" description="Polar residues" evidence="3">
    <location>
        <begin position="135"/>
        <end position="147"/>
    </location>
</feature>
<feature type="compositionally biased region" description="Basic and acidic residues" evidence="3">
    <location>
        <begin position="160"/>
        <end position="169"/>
    </location>
</feature>
<feature type="compositionally biased region" description="Basic and acidic residues" evidence="3">
    <location>
        <begin position="184"/>
        <end position="194"/>
    </location>
</feature>
<feature type="compositionally biased region" description="Polar residues" evidence="3">
    <location>
        <begin position="248"/>
        <end position="265"/>
    </location>
</feature>
<feature type="compositionally biased region" description="Basic residues" evidence="3">
    <location>
        <begin position="414"/>
        <end position="424"/>
    </location>
</feature>
<feature type="compositionally biased region" description="Low complexity" evidence="3">
    <location>
        <begin position="479"/>
        <end position="490"/>
    </location>
</feature>
<feature type="compositionally biased region" description="Basic and acidic residues" evidence="3">
    <location>
        <begin position="536"/>
        <end position="546"/>
    </location>
</feature>
<feature type="compositionally biased region" description="Basic and acidic residues" evidence="3">
    <location>
        <begin position="562"/>
        <end position="572"/>
    </location>
</feature>
<feature type="compositionally biased region" description="Low complexity" evidence="3">
    <location>
        <begin position="609"/>
        <end position="619"/>
    </location>
</feature>
<feature type="compositionally biased region" description="Basic and acidic residues" evidence="3">
    <location>
        <begin position="723"/>
        <end position="733"/>
    </location>
</feature>
<feature type="compositionally biased region" description="Polar residues" evidence="3">
    <location>
        <begin position="769"/>
        <end position="782"/>
    </location>
</feature>
<feature type="compositionally biased region" description="Low complexity" evidence="3">
    <location>
        <begin position="864"/>
        <end position="881"/>
    </location>
</feature>
<feature type="compositionally biased region" description="Polar residues" evidence="3">
    <location>
        <begin position="1055"/>
        <end position="1089"/>
    </location>
</feature>
<feature type="compositionally biased region" description="Low complexity" evidence="3">
    <location>
        <begin position="1091"/>
        <end position="1101"/>
    </location>
</feature>
<feature type="compositionally biased region" description="Low complexity" evidence="3">
    <location>
        <begin position="1271"/>
        <end position="1288"/>
    </location>
</feature>
<feature type="compositionally biased region" description="Low complexity" evidence="3">
    <location>
        <begin position="1316"/>
        <end position="1327"/>
    </location>
</feature>
<feature type="compositionally biased region" description="Basic and acidic residues" evidence="3">
    <location>
        <begin position="1328"/>
        <end position="1348"/>
    </location>
</feature>
<feature type="modified residue" description="Phosphoserine" evidence="8 9">
    <location>
        <position position="483"/>
    </location>
</feature>
<feature type="modified residue" description="Phosphoserine" evidence="9">
    <location>
        <position position="489"/>
    </location>
</feature>
<feature type="modified residue" description="Phosphoserine" evidence="8">
    <location>
        <position position="737"/>
    </location>
</feature>
<feature type="modified residue" description="Phosphoserine" evidence="9">
    <location>
        <position position="756"/>
    </location>
</feature>
<feature type="modified residue" description="Phosphoserine" evidence="10">
    <location>
        <position position="892"/>
    </location>
</feature>
<feature type="modified residue" description="Phosphothreonine" evidence="8">
    <location>
        <position position="933"/>
    </location>
</feature>
<feature type="splice variant" id="VSP_062344" description="In isoform 2.">
    <original>MPLSPPAQGDPGEPSPCRPPKKHTTFHLWRSKKKQQPAPPDCGVFVPHPLPAPAGEARALDVVDGKYVVRDSQEFPLHCGESQFFHTTSEALGSLLLESGIFKKSRAQPPEDNRRKPVLGKLGTLFTAGRRRNSRNGLESPTRSNAKPLSPKDVVASPKLPERESERSRSQSSQLKQTDTSEEGSPRENPREAEGELPESGGPAAPPDAELSPRWSSSAAAVAVQQCHENDSPQLEPLEAEGEPFPDATTTAKQLHSSPGNSSRQENAETPARSPGEDASPGAGHEQEAFLGVRGAPGSPTQERPAGGLGEAPNGAPSVCAEEGSLGPRNARSQPPKGASDLPGEPPAEGAAHTASSAQADCTARPKGHAHPAKVLTLDIYLSKTEGAQVDEPVVITPRAEDCGDWDDMEKRSSGRRSGRRRGSQKSTDSPGADAELPESAARDDAVFDDEVAPNAASDNASAEKKVKSPRAALDGGVASAASPESKPSPGTKGQLRGESDRSKQPPPASSPTKRKGRSRALEAVPAPPASGPRAPAKESPPKRVPDPSPVTKGTAAESGEEAARAIPRELPVKSSSLLPEIKPEHKRGPLPNHFNGRAEGGRSRELGRAAGAPGASDADGLKPRNHFGVGRSTVTTKVTLPAKPKHVELNLKTPKNLDSLGNEHNPFSQPVHKGNTATKISLFENKRTNSSPRHTDIRGQRNTPASSKTFVGRAKLNLAKKAKEMEQPEKKVMPNSPQNGVLVKETAIETKVTVSEEEILPATRGMNGDSSENQALGPQPNQDDKADVQTDAGCLSEPVASALIPVKDHKLLEKEDSEAADSKSLVLENVTDTAQDIPTTVDTKDLPPTAMPKPQHTFSDSQSPAESSPGPSLSLSAPAPGDVPKDTCVQSPISSFPCTDLKVSENHKGCVLPVSRQNNEKMPLLELGGETTPPLSTERSPEAVGSECPSRVLVQVRSFVLPVESTQDVSSQVIPESSEVREVQLPTCHSNEPEVVSVASCAPPQEEVLGNEHSHCTAELAAKSGPQVIPPASEKTLPIQAQSQGSRTPLMAESSPTNSPSSGNHLATPQRPDQTVTNGQDSPASLLNISAGSDDSVFDSSSDMEKFTEIIKQMDSAVCMPMKRKKARMPNSPAPHFAMPPIHEDHLEKVFDPKVFTFGLGKKKESQPEMSPALHLMQNLDTKSKLRPKRASAEQSVLFKSLHTNTNGNSEPLVMPEINDKENRDVTNGGIKRSRLEKSALFSSLLSSLPQDKIFSPSVTSVNTMTTAFSTSQNGSLSQSSVSQPTTEGAPPCGLNKEQSNLLPDNSLKVFNFNSSSTSHSSLKSPSHMEKYPQKEKTKEDLDSRSNLHLPETKFSELSKLKNDDMEKANHIESVIKSNLPNCANSDTDFMGLFKSSRYDPSISFSGMSLSDTMTLRGSVQNKLNPRPGKVVIYSEPDVSEKCIEVFSDIQDCSSWSLSPVILIKVVRGCWILYEQPNFEGHSIPLEEGELELSGLWGIEDILERHEEAESDKPVVIGSIRHVVQDYRVSHIDLFTEPEGLGILSSYFDDTEEMQGFGVMQKTCSMKVHWGTWLIYEEPGFQGVPFILEPGEYPDLSFWDTEEAYIGSMRPLKM</original>
    <variation>MQKPKTVAWENLGPEMSALGTAFSRE</variation>
    <location>
        <begin position="1"/>
        <end position="1615"/>
    </location>
</feature>
<feature type="splice variant" id="VSP_062345" description="In isoform 1.">
    <location>
        <begin position="1"/>
        <end position="408"/>
    </location>
</feature>
<feature type="sequence variant" id="VAR_055687" description="In dbSNP:rs11968933.">
    <original>G</original>
    <variation>D</variation>
    <location>
        <position position="675"/>
    </location>
</feature>
<feature type="sequence variant" id="VAR_055688" description="In dbSNP:rs1159148." evidence="4">
    <original>Q</original>
    <variation>P</variation>
    <location>
        <position position="701"/>
    </location>
</feature>
<feature type="sequence variant" id="VAR_055689" description="In dbSNP:rs3747787.">
    <original>C</original>
    <variation>R</variation>
    <location>
        <position position="899"/>
    </location>
</feature>
<feature type="sequence variant" id="VAR_055690" description="In dbSNP:rs1350902.">
    <original>L</original>
    <variation>V</variation>
    <location>
        <position position="1504"/>
    </location>
</feature>
<feature type="sequence variant" id="VAR_055691" description="In dbSNP:rs783396." evidence="4">
    <original>E</original>
    <variation>A</variation>
    <location>
        <position position="1604"/>
    </location>
</feature>
<feature type="sequence variant" id="VAR_055692" description="In dbSNP:rs2297970." evidence="4">
    <original>C</original>
    <variation>Y</variation>
    <location>
        <position position="1803"/>
    </location>
</feature>
<feature type="sequence variant" id="VAR_055693" description="In dbSNP:rs1676015.">
    <original>T</original>
    <variation>S</variation>
    <location>
        <position position="1853"/>
    </location>
</feature>
<feature type="strand" evidence="12">
    <location>
        <begin position="1431"/>
        <end position="1436"/>
    </location>
</feature>
<feature type="strand" evidence="12">
    <location>
        <begin position="1445"/>
        <end position="1447"/>
    </location>
</feature>
<feature type="strand" evidence="12">
    <location>
        <begin position="1461"/>
        <end position="1477"/>
    </location>
</feature>
<feature type="turn" evidence="12">
    <location>
        <begin position="1478"/>
        <end position="1480"/>
    </location>
</feature>
<feature type="strand" evidence="12">
    <location>
        <begin position="1481"/>
        <end position="1487"/>
    </location>
</feature>
<feature type="strand" evidence="12">
    <location>
        <begin position="1489"/>
        <end position="1496"/>
    </location>
</feature>
<feature type="helix" evidence="12">
    <location>
        <begin position="1502"/>
        <end position="1504"/>
    </location>
</feature>
<feature type="strand" evidence="12">
    <location>
        <begin position="1506"/>
        <end position="1508"/>
    </location>
</feature>
<feature type="strand" evidence="12">
    <location>
        <begin position="1520"/>
        <end position="1524"/>
    </location>
</feature>
<feature type="strand" evidence="11">
    <location>
        <begin position="1824"/>
        <end position="1830"/>
    </location>
</feature>
<feature type="turn" evidence="11">
    <location>
        <begin position="1831"/>
        <end position="1833"/>
    </location>
</feature>
<feature type="strand" evidence="11">
    <location>
        <begin position="1834"/>
        <end position="1842"/>
    </location>
</feature>
<feature type="helix" evidence="11">
    <location>
        <begin position="1848"/>
        <end position="1850"/>
    </location>
</feature>
<feature type="strand" evidence="11">
    <location>
        <begin position="1854"/>
        <end position="1868"/>
    </location>
</feature>
<feature type="strand" evidence="11">
    <location>
        <begin position="1880"/>
        <end position="1885"/>
    </location>
</feature>
<feature type="helix" evidence="11">
    <location>
        <begin position="1886"/>
        <end position="1889"/>
    </location>
</feature>
<feature type="strand" evidence="11">
    <location>
        <begin position="1899"/>
        <end position="1903"/>
    </location>
</feature>
<gene>
    <name evidence="7" type="primary">CRYBG1</name>
    <name evidence="5" type="synonym">AIM1</name>
</gene>
<protein>
    <recommendedName>
        <fullName evidence="7">Beta/gamma crystallin domain-containing protein 1</fullName>
    </recommendedName>
    <alternativeName>
        <fullName evidence="5">Absent in melanoma 1 protein</fullName>
    </alternativeName>
</protein>
<reference key="1">
    <citation type="journal article" date="2004" name="Nat. Genet.">
        <title>Complete sequencing and characterization of 21,243 full-length human cDNAs.</title>
        <authorList>
            <person name="Ota T."/>
            <person name="Suzuki Y."/>
            <person name="Nishikawa T."/>
            <person name="Otsuki T."/>
            <person name="Sugiyama T."/>
            <person name="Irie R."/>
            <person name="Wakamatsu A."/>
            <person name="Hayashi K."/>
            <person name="Sato H."/>
            <person name="Nagai K."/>
            <person name="Kimura K."/>
            <person name="Makita H."/>
            <person name="Sekine M."/>
            <person name="Obayashi M."/>
            <person name="Nishi T."/>
            <person name="Shibahara T."/>
            <person name="Tanaka T."/>
            <person name="Ishii S."/>
            <person name="Yamamoto J."/>
            <person name="Saito K."/>
            <person name="Kawai Y."/>
            <person name="Isono Y."/>
            <person name="Nakamura Y."/>
            <person name="Nagahari K."/>
            <person name="Murakami K."/>
            <person name="Yasuda T."/>
            <person name="Iwayanagi T."/>
            <person name="Wagatsuma M."/>
            <person name="Shiratori A."/>
            <person name="Sudo H."/>
            <person name="Hosoiri T."/>
            <person name="Kaku Y."/>
            <person name="Kodaira H."/>
            <person name="Kondo H."/>
            <person name="Sugawara M."/>
            <person name="Takahashi M."/>
            <person name="Kanda K."/>
            <person name="Yokoi T."/>
            <person name="Furuya T."/>
            <person name="Kikkawa E."/>
            <person name="Omura Y."/>
            <person name="Abe K."/>
            <person name="Kamihara K."/>
            <person name="Katsuta N."/>
            <person name="Sato K."/>
            <person name="Tanikawa M."/>
            <person name="Yamazaki M."/>
            <person name="Ninomiya K."/>
            <person name="Ishibashi T."/>
            <person name="Yamashita H."/>
            <person name="Murakawa K."/>
            <person name="Fujimori K."/>
            <person name="Tanai H."/>
            <person name="Kimata M."/>
            <person name="Watanabe M."/>
            <person name="Hiraoka S."/>
            <person name="Chiba Y."/>
            <person name="Ishida S."/>
            <person name="Ono Y."/>
            <person name="Takiguchi S."/>
            <person name="Watanabe S."/>
            <person name="Yosida M."/>
            <person name="Hotuta T."/>
            <person name="Kusano J."/>
            <person name="Kanehori K."/>
            <person name="Takahashi-Fujii A."/>
            <person name="Hara H."/>
            <person name="Tanase T.-O."/>
            <person name="Nomura Y."/>
            <person name="Togiya S."/>
            <person name="Komai F."/>
            <person name="Hara R."/>
            <person name="Takeuchi K."/>
            <person name="Arita M."/>
            <person name="Imose N."/>
            <person name="Musashino K."/>
            <person name="Yuuki H."/>
            <person name="Oshima A."/>
            <person name="Sasaki N."/>
            <person name="Aotsuka S."/>
            <person name="Yoshikawa Y."/>
            <person name="Matsunawa H."/>
            <person name="Ichihara T."/>
            <person name="Shiohata N."/>
            <person name="Sano S."/>
            <person name="Moriya S."/>
            <person name="Momiyama H."/>
            <person name="Satoh N."/>
            <person name="Takami S."/>
            <person name="Terashima Y."/>
            <person name="Suzuki O."/>
            <person name="Nakagawa S."/>
            <person name="Senoh A."/>
            <person name="Mizoguchi H."/>
            <person name="Goto Y."/>
            <person name="Shimizu F."/>
            <person name="Wakebe H."/>
            <person name="Hishigaki H."/>
            <person name="Watanabe T."/>
            <person name="Sugiyama A."/>
            <person name="Takemoto M."/>
            <person name="Kawakami B."/>
            <person name="Yamazaki M."/>
            <person name="Watanabe K."/>
            <person name="Kumagai A."/>
            <person name="Itakura S."/>
            <person name="Fukuzumi Y."/>
            <person name="Fujimori Y."/>
            <person name="Komiyama M."/>
            <person name="Tashiro H."/>
            <person name="Tanigami A."/>
            <person name="Fujiwara T."/>
            <person name="Ono T."/>
            <person name="Yamada K."/>
            <person name="Fujii Y."/>
            <person name="Ozaki K."/>
            <person name="Hirao M."/>
            <person name="Ohmori Y."/>
            <person name="Kawabata A."/>
            <person name="Hikiji T."/>
            <person name="Kobatake N."/>
            <person name="Inagaki H."/>
            <person name="Ikema Y."/>
            <person name="Okamoto S."/>
            <person name="Okitani R."/>
            <person name="Kawakami T."/>
            <person name="Noguchi S."/>
            <person name="Itoh T."/>
            <person name="Shigeta K."/>
            <person name="Senba T."/>
            <person name="Matsumura K."/>
            <person name="Nakajima Y."/>
            <person name="Mizuno T."/>
            <person name="Morinaga M."/>
            <person name="Sasaki M."/>
            <person name="Togashi T."/>
            <person name="Oyama M."/>
            <person name="Hata H."/>
            <person name="Watanabe M."/>
            <person name="Komatsu T."/>
            <person name="Mizushima-Sugano J."/>
            <person name="Satoh T."/>
            <person name="Shirai Y."/>
            <person name="Takahashi Y."/>
            <person name="Nakagawa K."/>
            <person name="Okumura K."/>
            <person name="Nagase T."/>
            <person name="Nomura N."/>
            <person name="Kikuchi H."/>
            <person name="Masuho Y."/>
            <person name="Yamashita R."/>
            <person name="Nakai K."/>
            <person name="Yada T."/>
            <person name="Nakamura Y."/>
            <person name="Ohara O."/>
            <person name="Isogai T."/>
            <person name="Sugano S."/>
        </authorList>
    </citation>
    <scope>NUCLEOTIDE SEQUENCE [LARGE SCALE MRNA] (ISOFORM 2)</scope>
    <source>
        <tissue>Placenta</tissue>
    </source>
</reference>
<reference key="2">
    <citation type="journal article" date="2003" name="Nature">
        <title>The DNA sequence and analysis of human chromosome 6.</title>
        <authorList>
            <person name="Mungall A.J."/>
            <person name="Palmer S.A."/>
            <person name="Sims S.K."/>
            <person name="Edwards C.A."/>
            <person name="Ashurst J.L."/>
            <person name="Wilming L."/>
            <person name="Jones M.C."/>
            <person name="Horton R."/>
            <person name="Hunt S.E."/>
            <person name="Scott C.E."/>
            <person name="Gilbert J.G.R."/>
            <person name="Clamp M.E."/>
            <person name="Bethel G."/>
            <person name="Milne S."/>
            <person name="Ainscough R."/>
            <person name="Almeida J.P."/>
            <person name="Ambrose K.D."/>
            <person name="Andrews T.D."/>
            <person name="Ashwell R.I.S."/>
            <person name="Babbage A.K."/>
            <person name="Bagguley C.L."/>
            <person name="Bailey J."/>
            <person name="Banerjee R."/>
            <person name="Barker D.J."/>
            <person name="Barlow K.F."/>
            <person name="Bates K."/>
            <person name="Beare D.M."/>
            <person name="Beasley H."/>
            <person name="Beasley O."/>
            <person name="Bird C.P."/>
            <person name="Blakey S.E."/>
            <person name="Bray-Allen S."/>
            <person name="Brook J."/>
            <person name="Brown A.J."/>
            <person name="Brown J.Y."/>
            <person name="Burford D.C."/>
            <person name="Burrill W."/>
            <person name="Burton J."/>
            <person name="Carder C."/>
            <person name="Carter N.P."/>
            <person name="Chapman J.C."/>
            <person name="Clark S.Y."/>
            <person name="Clark G."/>
            <person name="Clee C.M."/>
            <person name="Clegg S."/>
            <person name="Cobley V."/>
            <person name="Collier R.E."/>
            <person name="Collins J.E."/>
            <person name="Colman L.K."/>
            <person name="Corby N.R."/>
            <person name="Coville G.J."/>
            <person name="Culley K.M."/>
            <person name="Dhami P."/>
            <person name="Davies J."/>
            <person name="Dunn M."/>
            <person name="Earthrowl M.E."/>
            <person name="Ellington A.E."/>
            <person name="Evans K.A."/>
            <person name="Faulkner L."/>
            <person name="Francis M.D."/>
            <person name="Frankish A."/>
            <person name="Frankland J."/>
            <person name="French L."/>
            <person name="Garner P."/>
            <person name="Garnett J."/>
            <person name="Ghori M.J."/>
            <person name="Gilby L.M."/>
            <person name="Gillson C.J."/>
            <person name="Glithero R.J."/>
            <person name="Grafham D.V."/>
            <person name="Grant M."/>
            <person name="Gribble S."/>
            <person name="Griffiths C."/>
            <person name="Griffiths M.N.D."/>
            <person name="Hall R."/>
            <person name="Halls K.S."/>
            <person name="Hammond S."/>
            <person name="Harley J.L."/>
            <person name="Hart E.A."/>
            <person name="Heath P.D."/>
            <person name="Heathcott R."/>
            <person name="Holmes S.J."/>
            <person name="Howden P.J."/>
            <person name="Howe K.L."/>
            <person name="Howell G.R."/>
            <person name="Huckle E."/>
            <person name="Humphray S.J."/>
            <person name="Humphries M.D."/>
            <person name="Hunt A.R."/>
            <person name="Johnson C.M."/>
            <person name="Joy A.A."/>
            <person name="Kay M."/>
            <person name="Keenan S.J."/>
            <person name="Kimberley A.M."/>
            <person name="King A."/>
            <person name="Laird G.K."/>
            <person name="Langford C."/>
            <person name="Lawlor S."/>
            <person name="Leongamornlert D.A."/>
            <person name="Leversha M."/>
            <person name="Lloyd C.R."/>
            <person name="Lloyd D.M."/>
            <person name="Loveland J.E."/>
            <person name="Lovell J."/>
            <person name="Martin S."/>
            <person name="Mashreghi-Mohammadi M."/>
            <person name="Maslen G.L."/>
            <person name="Matthews L."/>
            <person name="McCann O.T."/>
            <person name="McLaren S.J."/>
            <person name="McLay K."/>
            <person name="McMurray A."/>
            <person name="Moore M.J.F."/>
            <person name="Mullikin J.C."/>
            <person name="Niblett D."/>
            <person name="Nickerson T."/>
            <person name="Novik K.L."/>
            <person name="Oliver K."/>
            <person name="Overton-Larty E.K."/>
            <person name="Parker A."/>
            <person name="Patel R."/>
            <person name="Pearce A.V."/>
            <person name="Peck A.I."/>
            <person name="Phillimore B.J.C.T."/>
            <person name="Phillips S."/>
            <person name="Plumb R.W."/>
            <person name="Porter K.M."/>
            <person name="Ramsey Y."/>
            <person name="Ranby S.A."/>
            <person name="Rice C.M."/>
            <person name="Ross M.T."/>
            <person name="Searle S.M."/>
            <person name="Sehra H.K."/>
            <person name="Sheridan E."/>
            <person name="Skuce C.D."/>
            <person name="Smith S."/>
            <person name="Smith M."/>
            <person name="Spraggon L."/>
            <person name="Squares S.L."/>
            <person name="Steward C.A."/>
            <person name="Sycamore N."/>
            <person name="Tamlyn-Hall G."/>
            <person name="Tester J."/>
            <person name="Theaker A.J."/>
            <person name="Thomas D.W."/>
            <person name="Thorpe A."/>
            <person name="Tracey A."/>
            <person name="Tromans A."/>
            <person name="Tubby B."/>
            <person name="Wall M."/>
            <person name="Wallis J.M."/>
            <person name="West A.P."/>
            <person name="White S.S."/>
            <person name="Whitehead S.L."/>
            <person name="Whittaker H."/>
            <person name="Wild A."/>
            <person name="Willey D.J."/>
            <person name="Wilmer T.E."/>
            <person name="Wood J.M."/>
            <person name="Wray P.W."/>
            <person name="Wyatt J.C."/>
            <person name="Young L."/>
            <person name="Younger R.M."/>
            <person name="Bentley D.R."/>
            <person name="Coulson A."/>
            <person name="Durbin R.M."/>
            <person name="Hubbard T."/>
            <person name="Sulston J.E."/>
            <person name="Dunham I."/>
            <person name="Rogers J."/>
            <person name="Beck S."/>
        </authorList>
    </citation>
    <scope>NUCLEOTIDE SEQUENCE [LARGE SCALE GENOMIC DNA]</scope>
</reference>
<reference key="3">
    <citation type="submission" date="2005-07" db="EMBL/GenBank/DDBJ databases">
        <authorList>
            <person name="Mural R.J."/>
            <person name="Istrail S."/>
            <person name="Sutton G."/>
            <person name="Florea L."/>
            <person name="Halpern A.L."/>
            <person name="Mobarry C.M."/>
            <person name="Lippert R."/>
            <person name="Walenz B."/>
            <person name="Shatkay H."/>
            <person name="Dew I."/>
            <person name="Miller J.R."/>
            <person name="Flanigan M.J."/>
            <person name="Edwards N.J."/>
            <person name="Bolanos R."/>
            <person name="Fasulo D."/>
            <person name="Halldorsson B.V."/>
            <person name="Hannenhalli S."/>
            <person name="Turner R."/>
            <person name="Yooseph S."/>
            <person name="Lu F."/>
            <person name="Nusskern D.R."/>
            <person name="Shue B.C."/>
            <person name="Zheng X.H."/>
            <person name="Zhong F."/>
            <person name="Delcher A.L."/>
            <person name="Huson D.H."/>
            <person name="Kravitz S.A."/>
            <person name="Mouchard L."/>
            <person name="Reinert K."/>
            <person name="Remington K.A."/>
            <person name="Clark A.G."/>
            <person name="Waterman M.S."/>
            <person name="Eichler E.E."/>
            <person name="Adams M.D."/>
            <person name="Hunkapiller M.W."/>
            <person name="Myers E.W."/>
            <person name="Venter J.C."/>
        </authorList>
    </citation>
    <scope>NUCLEOTIDE SEQUENCE [LARGE SCALE GENOMIC DNA]</scope>
</reference>
<reference key="4">
    <citation type="journal article" date="1997" name="Proc. Natl. Acad. Sci. U.S.A.">
        <title>AIM1, a novel non-lens member of the betagamma-crystallin superfamily, is associated with the control of tumorigenicity in human malignant melanoma.</title>
        <authorList>
            <person name="Ray M.E."/>
            <person name="Wistow G."/>
            <person name="Su Y.A."/>
            <person name="Meltzer P.S."/>
            <person name="Trent J.M."/>
        </authorList>
    </citation>
    <scope>NUCLEOTIDE SEQUENCE [GENOMIC DNA] OF 1-86 (ISOFORM 1)</scope>
    <scope>NUCLEOTIDE SEQUENCE [MRNA] OF 495-2131 (ISOFORM 3)</scope>
    <scope>VARIANTS PRO-701; ALA-1604 AND TYR-1803</scope>
    <source>
        <tissue>Liver</tissue>
    </source>
</reference>
<reference key="5">
    <citation type="journal article" date="2008" name="Proc. Natl. Acad. Sci. U.S.A.">
        <title>A quantitative atlas of mitotic phosphorylation.</title>
        <authorList>
            <person name="Dephoure N."/>
            <person name="Zhou C."/>
            <person name="Villen J."/>
            <person name="Beausoleil S.A."/>
            <person name="Bakalarski C.E."/>
            <person name="Elledge S.J."/>
            <person name="Gygi S.P."/>
        </authorList>
    </citation>
    <scope>IDENTIFICATION BY MASS SPECTROMETRY [LARGE SCALE ANALYSIS]</scope>
    <source>
        <tissue>Cervix carcinoma</tissue>
    </source>
</reference>
<reference key="6">
    <citation type="journal article" date="2009" name="Sci. Signal.">
        <title>Quantitative phosphoproteomic analysis of T cell receptor signaling reveals system-wide modulation of protein-protein interactions.</title>
        <authorList>
            <person name="Mayya V."/>
            <person name="Lundgren D.H."/>
            <person name="Hwang S.-I."/>
            <person name="Rezaul K."/>
            <person name="Wu L."/>
            <person name="Eng J.K."/>
            <person name="Rodionov V."/>
            <person name="Han D.K."/>
        </authorList>
    </citation>
    <scope>PHOSPHORYLATION [LARGE SCALE ANALYSIS] AT SER-483; SER-737 AND THR-933</scope>
    <scope>IDENTIFICATION BY MASS SPECTROMETRY [LARGE SCALE ANALYSIS]</scope>
    <source>
        <tissue>Leukemic T-cell</tissue>
    </source>
</reference>
<reference key="7">
    <citation type="journal article" date="2011" name="BMC Syst. Biol.">
        <title>Initial characterization of the human central proteome.</title>
        <authorList>
            <person name="Burkard T.R."/>
            <person name="Planyavsky M."/>
            <person name="Kaupe I."/>
            <person name="Breitwieser F.P."/>
            <person name="Buerckstuemmer T."/>
            <person name="Bennett K.L."/>
            <person name="Superti-Furga G."/>
            <person name="Colinge J."/>
        </authorList>
    </citation>
    <scope>IDENTIFICATION BY MASS SPECTROMETRY [LARGE SCALE ANALYSIS]</scope>
</reference>
<reference key="8">
    <citation type="journal article" date="2011" name="Sci. Signal.">
        <title>System-wide temporal characterization of the proteome and phosphoproteome of human embryonic stem cell differentiation.</title>
        <authorList>
            <person name="Rigbolt K.T."/>
            <person name="Prokhorova T.A."/>
            <person name="Akimov V."/>
            <person name="Henningsen J."/>
            <person name="Johansen P.T."/>
            <person name="Kratchmarova I."/>
            <person name="Kassem M."/>
            <person name="Mann M."/>
            <person name="Olsen J.V."/>
            <person name="Blagoev B."/>
        </authorList>
    </citation>
    <scope>IDENTIFICATION BY MASS SPECTROMETRY [LARGE SCALE ANALYSIS]</scope>
</reference>
<reference key="9">
    <citation type="journal article" date="2013" name="J. Proteome Res.">
        <title>Toward a comprehensive characterization of a human cancer cell phosphoproteome.</title>
        <authorList>
            <person name="Zhou H."/>
            <person name="Di Palma S."/>
            <person name="Preisinger C."/>
            <person name="Peng M."/>
            <person name="Polat A.N."/>
            <person name="Heck A.J."/>
            <person name="Mohammed S."/>
        </authorList>
    </citation>
    <scope>PHOSPHORYLATION [LARGE SCALE ANALYSIS] AT SER-483; SER-489 AND SER-756</scope>
    <scope>IDENTIFICATION BY MASS SPECTROMETRY [LARGE SCALE ANALYSIS]</scope>
    <source>
        <tissue>Cervix carcinoma</tissue>
    </source>
</reference>
<reference key="10">
    <citation type="journal article" date="2014" name="J. Proteomics">
        <title>An enzyme assisted RP-RPLC approach for in-depth analysis of human liver phosphoproteome.</title>
        <authorList>
            <person name="Bian Y."/>
            <person name="Song C."/>
            <person name="Cheng K."/>
            <person name="Dong M."/>
            <person name="Wang F."/>
            <person name="Huang J."/>
            <person name="Sun D."/>
            <person name="Wang L."/>
            <person name="Ye M."/>
            <person name="Zou H."/>
        </authorList>
    </citation>
    <scope>PHOSPHORYLATION [LARGE SCALE ANALYSIS] AT SER-892</scope>
    <scope>IDENTIFICATION BY MASS SPECTROMETRY [LARGE SCALE ANALYSIS]</scope>
    <source>
        <tissue>Liver</tissue>
    </source>
</reference>
<reference key="11">
    <citation type="submission" date="2006-06" db="PDB data bank">
        <title>Solution structure of the fifth crystallin domain of the non-lens protein, absent in melanoma 1.</title>
        <authorList>
            <consortium name="RIKEN structural genomics initiative (RSGI)"/>
        </authorList>
    </citation>
    <scope>STRUCTURE BY NMR OF 1824-1903</scope>
</reference>
<reference key="12">
    <citation type="journal article" date="2008" name="J. Mol. Biol.">
        <title>Exploring the limits of sequence and structure in a variant betagamma-crystallin domain of the protein absent in melanoma-1 (AIM1).</title>
        <authorList>
            <person name="Aravind P."/>
            <person name="Wistow G."/>
            <person name="Sharma Y."/>
            <person name="Sankaranarayanan R."/>
        </authorList>
    </citation>
    <scope>X-RAY CRYSTALLOGRAPHY (1.88 ANGSTROMS) OF 1430-1525</scope>
</reference>
<accession>Q9Y4K1</accession>
<accession>A0A0J9YWL0</accession>
<accession>B4DU04</accession>
<accession>O00296</accession>
<accession>Q5VWJ2</accession>
<sequence>MPLSPPAQGDPGEPSPCRPPKKHTTFHLWRSKKKQQPAPPDCGVFVPHPLPAPAGEARALDVVDGKYVVRDSQEFPLHCGESQFFHTTSEALGSLLLESGIFKKSRAQPPEDNRRKPVLGKLGTLFTAGRRRNSRNGLESPTRSNAKPLSPKDVVASPKLPERESERSRSQSSQLKQTDTSEEGSPRENPREAEGELPESGGPAAPPDAELSPRWSSSAAAVAVQQCHENDSPQLEPLEAEGEPFPDATTTAKQLHSSPGNSSRQENAETPARSPGEDASPGAGHEQEAFLGVRGAPGSPTQERPAGGLGEAPNGAPSVCAEEGSLGPRNARSQPPKGASDLPGEPPAEGAAHTASSAQADCTARPKGHAHPAKVLTLDIYLSKTEGAQVDEPVVITPRAEDCGDWDDMEKRSSGRRSGRRRGSQKSTDSPGADAELPESAARDDAVFDDEVAPNAASDNASAEKKVKSPRAALDGGVASAASPESKPSPGTKGQLRGESDRSKQPPPASSPTKRKGRSRALEAVPAPPASGPRAPAKESPPKRVPDPSPVTKGTAAESGEEAARAIPRELPVKSSSLLPEIKPEHKRGPLPNHFNGRAEGGRSRELGRAAGAPGASDADGLKPRNHFGVGRSTVTTKVTLPAKPKHVELNLKTPKNLDSLGNEHNPFSQPVHKGNTATKISLFENKRTNSSPRHTDIRGQRNTPASSKTFVGRAKLNLAKKAKEMEQPEKKVMPNSPQNGVLVKETAIETKVTVSEEEILPATRGMNGDSSENQALGPQPNQDDKADVQTDAGCLSEPVASALIPVKDHKLLEKEDSEAADSKSLVLENVTDTAQDIPTTVDTKDLPPTAMPKPQHTFSDSQSPAESSPGPSLSLSAPAPGDVPKDTCVQSPISSFPCTDLKVSENHKGCVLPVSRQNNEKMPLLELGGETTPPLSTERSPEAVGSECPSRVLVQVRSFVLPVESTQDVSSQVIPESSEVREVQLPTCHSNEPEVVSVASCAPPQEEVLGNEHSHCTAELAAKSGPQVIPPASEKTLPIQAQSQGSRTPLMAESSPTNSPSSGNHLATPQRPDQTVTNGQDSPASLLNISAGSDDSVFDSSSDMEKFTEIIKQMDSAVCMPMKRKKARMPNSPAPHFAMPPIHEDHLEKVFDPKVFTFGLGKKKESQPEMSPALHLMQNLDTKSKLRPKRASAEQSVLFKSLHTNTNGNSEPLVMPEINDKENRDVTNGGIKRSRLEKSALFSSLLSSLPQDKIFSPSVTSVNTMTTAFSTSQNGSLSQSSVSQPTTEGAPPCGLNKEQSNLLPDNSLKVFNFNSSSTSHSSLKSPSHMEKYPQKEKTKEDLDSRSNLHLPETKFSELSKLKNDDMEKANHIESVIKSNLPNCANSDTDFMGLFKSSRYDPSISFSGMSLSDTMTLRGSVQNKLNPRPGKVVIYSEPDVSEKCIEVFSDIQDCSSWSLSPVILIKVVRGCWILYEQPNFEGHSIPLEEGELELSGLWGIEDILERHEEAESDKPVVIGSIRHVVQDYRVSHIDLFTEPEGLGILSSYFDDTEEMQGFGVMQKTCSMKVHWGTWLIYEEPGFQGVPFILEPGEYPDLSFWDTEEAYIGSMRPLKMGGRKVEFPTDPKVVVYEKPFFEGKCVELETGMCSFVMEGGETEEATGDDHLPFTSVGSMKVLRGIWVAYEKPGFTGHQYLLEEGEYRDWKAWGGYNGELQSLRPILGDFSNAHMIMYSEKNFGSKGSSIDVLGIVANLKETGYGVKTQSINVLSGVWVAYENPDFTGEQYILDKGFYTSFEDWGGKNCKISSVQPICLDSFTGPRRRNQIHLFSEPQFQGHSQSFEETTSQIDDSFSTKSCRVSGGSWVVYDGENFTGNQYVLEEGHYPCLSAMGCPPGATFKSLRFIDVEFSEPTIILFEREDFKGKKIELNAETVNLRSLGFNTQIRSVQVIGGIWVTYEYGSYRGRQFLLSPAEVPNWYEFSGCRQIGSLRPFVQKRIYFRLRNKATGLFMSTNGNLEDLKLLRIQVMEDVGADDQIWIYQEGCIKCRIAEDCCLTIVGSLVTSGSKLGLALDQNADSQFWSLKSDGRIYSKLKPNLVLDIKGGTQYDQNHIILNTVSKEKFTQVWEAMVLYT</sequence>